<protein>
    <recommendedName>
        <fullName>U3 small nucleolar RNA-associated protein 25</fullName>
        <shortName>U3 snoRNA-associated protein 25</shortName>
    </recommendedName>
    <alternativeName>
        <fullName>U three protein 25</fullName>
    </alternativeName>
</protein>
<name>UTP25_CANAW</name>
<gene>
    <name type="primary">UTP25</name>
    <name type="ORF">CAWG_01983</name>
</gene>
<evidence type="ECO:0000250" key="1"/>
<evidence type="ECO:0000256" key="2">
    <source>
        <dbReference type="SAM" id="MobiDB-lite"/>
    </source>
</evidence>
<evidence type="ECO:0000305" key="3"/>
<proteinExistence type="inferred from homology"/>
<sequence>MAKQFKRKSNGVSESNRKRGRQELRKVTRTAARKQQQDENHEDDLDVNNDSQEDNSEKEIDEEDEEGERDDNRGKAYSALLTLLKSEHKEKPKNVTSGSSSQVEKANASDSEDDGIAGANVEEEEEGEIDNNVDENEIVSESDVDDDDEDATNRLSTDPFESHFNLPSDDYLAKEEKLVLKDNEKWRTVDKQTYSDLAISSLVQLPPGEPLNPPLLKSSKLSEYTIKKRVLDSYEQAYGTDLSDLESTLINPILNYRDVNFQYKSFKNKFYRRLYTLHALNHIFKTRDRILKNTAKLHAAKEDSEELELRDQGFTRPKVLIMLPTRDACYEVVEQLIKLSGTEQQENKKKFNDQFYVKATPPATKPEDFRDAFKGNNSDFFCIGLKFTRKSLKLYSSFYSSDIILASPIGLSMILENPDKKKRQYDFLSSIEVLIVDKCNQIEMQNWDHVNTVMKYLNKVPKEFHDADFSRIRMWSINDQAKLLRQTLVFCEYLTPSINNLISSKSYNLSGKVKFKPIINSENSMMNSIGLKIKQIFQRFDSQSPLQDPDSRYKYFINAILPSLLKTSSYEDGIMIFIPSYFDYLRVKNYLKTSTKFTFGSIDEYSSQSKLTKTRQEFASGKIKLLLYTERLHYFRRYEISGVKTLIMYGLPSNPLFYKELIRFIGKSVFKEECDLDLALVKILFSKWDAVNLEKIVGNERAPVLCNSMNELYEFR</sequence>
<keyword id="KW-0539">Nucleus</keyword>
<keyword id="KW-0687">Ribonucleoprotein</keyword>
<keyword id="KW-0690">Ribosome biogenesis</keyword>
<keyword id="KW-0698">rRNA processing</keyword>
<dbReference type="EMBL" id="CM000309">
    <property type="protein sequence ID" value="EEQ43735.1"/>
    <property type="molecule type" value="Genomic_DNA"/>
</dbReference>
<dbReference type="SMR" id="C4YMA4"/>
<dbReference type="PaxDb" id="5476-C4YMA4"/>
<dbReference type="VEuPathDB" id="FungiDB:CAWG_01983"/>
<dbReference type="HOGENOM" id="CLU_018705_0_1_1"/>
<dbReference type="OMA" id="GIMIFIP"/>
<dbReference type="OrthoDB" id="17687at766764"/>
<dbReference type="Proteomes" id="UP000001429">
    <property type="component" value="Chromosome R"/>
</dbReference>
<dbReference type="GO" id="GO:0005730">
    <property type="term" value="C:nucleolus"/>
    <property type="evidence" value="ECO:0007669"/>
    <property type="project" value="UniProtKB-SubCell"/>
</dbReference>
<dbReference type="GO" id="GO:0032040">
    <property type="term" value="C:small-subunit processome"/>
    <property type="evidence" value="ECO:0007669"/>
    <property type="project" value="TreeGrafter"/>
</dbReference>
<dbReference type="GO" id="GO:0019843">
    <property type="term" value="F:rRNA binding"/>
    <property type="evidence" value="ECO:0007669"/>
    <property type="project" value="TreeGrafter"/>
</dbReference>
<dbReference type="GO" id="GO:0034511">
    <property type="term" value="F:U3 snoRNA binding"/>
    <property type="evidence" value="ECO:0007669"/>
    <property type="project" value="InterPro"/>
</dbReference>
<dbReference type="GO" id="GO:0000462">
    <property type="term" value="P:maturation of SSU-rRNA from tricistronic rRNA transcript (SSU-rRNA, 5.8S rRNA, LSU-rRNA)"/>
    <property type="evidence" value="ECO:0007669"/>
    <property type="project" value="TreeGrafter"/>
</dbReference>
<dbReference type="FunFam" id="3.40.50.300:FF:002072">
    <property type="entry name" value="U3 small nucleolar RNA-associated protein 25"/>
    <property type="match status" value="1"/>
</dbReference>
<dbReference type="Gene3D" id="3.40.50.300">
    <property type="entry name" value="P-loop containing nucleotide triphosphate hydrolases"/>
    <property type="match status" value="1"/>
</dbReference>
<dbReference type="InterPro" id="IPR027417">
    <property type="entry name" value="P-loop_NTPase"/>
</dbReference>
<dbReference type="InterPro" id="IPR010678">
    <property type="entry name" value="UTP25"/>
</dbReference>
<dbReference type="InterPro" id="IPR053939">
    <property type="entry name" value="UTP25_C"/>
</dbReference>
<dbReference type="InterPro" id="IPR053940">
    <property type="entry name" value="UTP25_NTPase-like"/>
</dbReference>
<dbReference type="PANTHER" id="PTHR12933">
    <property type="entry name" value="ORF PROTEIN-RELATED"/>
    <property type="match status" value="1"/>
</dbReference>
<dbReference type="PANTHER" id="PTHR12933:SF0">
    <property type="entry name" value="U3 SMALL NUCLEOLAR RNA-ASSOCIATED PROTEIN 25 HOMOLOG"/>
    <property type="match status" value="1"/>
</dbReference>
<dbReference type="Pfam" id="PF06862">
    <property type="entry name" value="Utp25_C"/>
    <property type="match status" value="1"/>
</dbReference>
<dbReference type="Pfam" id="PF22916">
    <property type="entry name" value="UTP25_NTPase-like"/>
    <property type="match status" value="1"/>
</dbReference>
<accession>C4YMA4</accession>
<organism>
    <name type="scientific">Candida albicans (strain WO-1)</name>
    <name type="common">Yeast</name>
    <dbReference type="NCBI Taxonomy" id="294748"/>
    <lineage>
        <taxon>Eukaryota</taxon>
        <taxon>Fungi</taxon>
        <taxon>Dikarya</taxon>
        <taxon>Ascomycota</taxon>
        <taxon>Saccharomycotina</taxon>
        <taxon>Pichiomycetes</taxon>
        <taxon>Debaryomycetaceae</taxon>
        <taxon>Candida/Lodderomyces clade</taxon>
        <taxon>Candida</taxon>
    </lineage>
</organism>
<comment type="function">
    <text evidence="1">DEAD-box RNA helicase-like protein required for pre-18S rRNA processing, specifically at sites A0, A1, and A2.</text>
</comment>
<comment type="subunit">
    <text evidence="1">Component of the ribosomal small subunit (SSU) processome composed of at least 40 protein subunits and snoRNA U3.</text>
</comment>
<comment type="subcellular location">
    <subcellularLocation>
        <location evidence="1">Nucleus</location>
        <location evidence="1">Nucleolus</location>
    </subcellularLocation>
</comment>
<comment type="similarity">
    <text evidence="3">Belongs to the UTP25 family.</text>
</comment>
<feature type="chain" id="PRO_0000408108" description="U3 small nucleolar RNA-associated protein 25">
    <location>
        <begin position="1"/>
        <end position="716"/>
    </location>
</feature>
<feature type="region of interest" description="Disordered" evidence="2">
    <location>
        <begin position="1"/>
        <end position="161"/>
    </location>
</feature>
<feature type="compositionally biased region" description="Basic and acidic residues" evidence="2">
    <location>
        <begin position="15"/>
        <end position="26"/>
    </location>
</feature>
<feature type="compositionally biased region" description="Acidic residues" evidence="2">
    <location>
        <begin position="40"/>
        <end position="69"/>
    </location>
</feature>
<feature type="compositionally biased region" description="Polar residues" evidence="2">
    <location>
        <begin position="94"/>
        <end position="104"/>
    </location>
</feature>
<feature type="compositionally biased region" description="Acidic residues" evidence="2">
    <location>
        <begin position="110"/>
        <end position="150"/>
    </location>
</feature>
<reference key="1">
    <citation type="journal article" date="2009" name="Nature">
        <title>Evolution of pathogenicity and sexual reproduction in eight Candida genomes.</title>
        <authorList>
            <person name="Butler G."/>
            <person name="Rasmussen M.D."/>
            <person name="Lin M.F."/>
            <person name="Santos M.A.S."/>
            <person name="Sakthikumar S."/>
            <person name="Munro C.A."/>
            <person name="Rheinbay E."/>
            <person name="Grabherr M."/>
            <person name="Forche A."/>
            <person name="Reedy J.L."/>
            <person name="Agrafioti I."/>
            <person name="Arnaud M.B."/>
            <person name="Bates S."/>
            <person name="Brown A.J.P."/>
            <person name="Brunke S."/>
            <person name="Costanzo M.C."/>
            <person name="Fitzpatrick D.A."/>
            <person name="de Groot P.W.J."/>
            <person name="Harris D."/>
            <person name="Hoyer L.L."/>
            <person name="Hube B."/>
            <person name="Klis F.M."/>
            <person name="Kodira C."/>
            <person name="Lennard N."/>
            <person name="Logue M.E."/>
            <person name="Martin R."/>
            <person name="Neiman A.M."/>
            <person name="Nikolaou E."/>
            <person name="Quail M.A."/>
            <person name="Quinn J."/>
            <person name="Santos M.C."/>
            <person name="Schmitzberger F.F."/>
            <person name="Sherlock G."/>
            <person name="Shah P."/>
            <person name="Silverstein K.A.T."/>
            <person name="Skrzypek M.S."/>
            <person name="Soll D."/>
            <person name="Staggs R."/>
            <person name="Stansfield I."/>
            <person name="Stumpf M.P.H."/>
            <person name="Sudbery P.E."/>
            <person name="Srikantha T."/>
            <person name="Zeng Q."/>
            <person name="Berman J."/>
            <person name="Berriman M."/>
            <person name="Heitman J."/>
            <person name="Gow N.A.R."/>
            <person name="Lorenz M.C."/>
            <person name="Birren B.W."/>
            <person name="Kellis M."/>
            <person name="Cuomo C.A."/>
        </authorList>
    </citation>
    <scope>NUCLEOTIDE SEQUENCE [LARGE SCALE GENOMIC DNA]</scope>
    <source>
        <strain>WO-1</strain>
    </source>
</reference>